<organism>
    <name type="scientific">Homo sapiens</name>
    <name type="common">Human</name>
    <dbReference type="NCBI Taxonomy" id="9606"/>
    <lineage>
        <taxon>Eukaryota</taxon>
        <taxon>Metazoa</taxon>
        <taxon>Chordata</taxon>
        <taxon>Craniata</taxon>
        <taxon>Vertebrata</taxon>
        <taxon>Euteleostomi</taxon>
        <taxon>Mammalia</taxon>
        <taxon>Eutheria</taxon>
        <taxon>Euarchontoglires</taxon>
        <taxon>Primates</taxon>
        <taxon>Haplorrhini</taxon>
        <taxon>Catarrhini</taxon>
        <taxon>Hominidae</taxon>
        <taxon>Homo</taxon>
    </lineage>
</organism>
<dbReference type="EMBL" id="AC008554">
    <property type="status" value="NOT_ANNOTATED_CDS"/>
    <property type="molecule type" value="Genomic_DNA"/>
</dbReference>
<dbReference type="EMBL" id="AC010636">
    <property type="status" value="NOT_ANNOTATED_CDS"/>
    <property type="molecule type" value="Genomic_DNA"/>
</dbReference>
<dbReference type="EMBL" id="BC015765">
    <property type="status" value="NOT_ANNOTATED_CDS"/>
    <property type="molecule type" value="mRNA"/>
</dbReference>
<dbReference type="EMBL" id="AF044026">
    <property type="protein sequence ID" value="AAC25694.1"/>
    <property type="molecule type" value="Genomic_DNA"/>
</dbReference>
<dbReference type="CCDS" id="CCDS54238.1"/>
<dbReference type="RefSeq" id="NP_001152765.1">
    <property type="nucleotide sequence ID" value="NM_001159293.2"/>
</dbReference>
<dbReference type="SMR" id="O75373"/>
<dbReference type="BioGRID" id="877828">
    <property type="interactions" value="2"/>
</dbReference>
<dbReference type="FunCoup" id="O75373">
    <property type="interactions" value="4"/>
</dbReference>
<dbReference type="IntAct" id="O75373">
    <property type="interactions" value="2"/>
</dbReference>
<dbReference type="MINT" id="O75373"/>
<dbReference type="STRING" id="9606.ENSP00000395733"/>
<dbReference type="iPTMnet" id="O75373"/>
<dbReference type="PhosphoSitePlus" id="O75373"/>
<dbReference type="BioMuta" id="ZNF737"/>
<dbReference type="jPOST" id="O75373"/>
<dbReference type="MassIVE" id="O75373"/>
<dbReference type="PaxDb" id="9606-ENSP00000395733"/>
<dbReference type="PeptideAtlas" id="O75373"/>
<dbReference type="ProteomicsDB" id="49947"/>
<dbReference type="Antibodypedia" id="67955">
    <property type="antibodies" value="61 antibodies from 11 providers"/>
</dbReference>
<dbReference type="DNASU" id="100129842"/>
<dbReference type="Ensembl" id="ENST00000427401.9">
    <property type="protein sequence ID" value="ENSP00000395733.3"/>
    <property type="gene ID" value="ENSG00000237440.9"/>
</dbReference>
<dbReference type="GeneID" id="100129842"/>
<dbReference type="KEGG" id="hsa:100129842"/>
<dbReference type="MANE-Select" id="ENST00000427401.9">
    <property type="protein sequence ID" value="ENSP00000395733.3"/>
    <property type="RefSeq nucleotide sequence ID" value="NM_001159293.2"/>
    <property type="RefSeq protein sequence ID" value="NP_001152765.1"/>
</dbReference>
<dbReference type="UCSC" id="uc002npa.4">
    <property type="organism name" value="human"/>
</dbReference>
<dbReference type="AGR" id="HGNC:32468"/>
<dbReference type="CTD" id="100129842"/>
<dbReference type="GeneCards" id="ZNF737"/>
<dbReference type="HGNC" id="HGNC:32468">
    <property type="gene designation" value="ZNF737"/>
</dbReference>
<dbReference type="HPA" id="ENSG00000237440">
    <property type="expression patterns" value="Tissue enhanced (thyroid)"/>
</dbReference>
<dbReference type="MIM" id="603984">
    <property type="type" value="gene"/>
</dbReference>
<dbReference type="neXtProt" id="NX_O75373"/>
<dbReference type="OpenTargets" id="ENSG00000237440"/>
<dbReference type="VEuPathDB" id="HostDB:ENSG00000237440"/>
<dbReference type="eggNOG" id="KOG1721">
    <property type="taxonomic scope" value="Eukaryota"/>
</dbReference>
<dbReference type="GeneTree" id="ENSGT01130000278311"/>
<dbReference type="HOGENOM" id="CLU_002678_44_0_1"/>
<dbReference type="InParanoid" id="O75373"/>
<dbReference type="OMA" id="HKRGYNE"/>
<dbReference type="OrthoDB" id="9537077at2759"/>
<dbReference type="PAN-GO" id="O75373">
    <property type="GO annotations" value="3 GO annotations based on evolutionary models"/>
</dbReference>
<dbReference type="PhylomeDB" id="O75373"/>
<dbReference type="TreeFam" id="TF342117"/>
<dbReference type="PathwayCommons" id="O75373"/>
<dbReference type="Reactome" id="R-HSA-212436">
    <property type="pathway name" value="Generic Transcription Pathway"/>
</dbReference>
<dbReference type="BioGRID-ORCS" id="100129842">
    <property type="hits" value="11 hits in 1083 CRISPR screens"/>
</dbReference>
<dbReference type="GenomeRNAi" id="100129842"/>
<dbReference type="Pharos" id="O75373">
    <property type="development level" value="Tdark"/>
</dbReference>
<dbReference type="PRO" id="PR:O75373"/>
<dbReference type="Proteomes" id="UP000005640">
    <property type="component" value="Chromosome 19"/>
</dbReference>
<dbReference type="RNAct" id="O75373">
    <property type="molecule type" value="protein"/>
</dbReference>
<dbReference type="Bgee" id="ENSG00000237440">
    <property type="expression patterns" value="Expressed in corpus callosum and 104 other cell types or tissues"/>
</dbReference>
<dbReference type="ExpressionAtlas" id="O75373">
    <property type="expression patterns" value="baseline and differential"/>
</dbReference>
<dbReference type="GO" id="GO:0005634">
    <property type="term" value="C:nucleus"/>
    <property type="evidence" value="ECO:0007669"/>
    <property type="project" value="UniProtKB-SubCell"/>
</dbReference>
<dbReference type="GO" id="GO:0000981">
    <property type="term" value="F:DNA-binding transcription factor activity, RNA polymerase II-specific"/>
    <property type="evidence" value="ECO:0000318"/>
    <property type="project" value="GO_Central"/>
</dbReference>
<dbReference type="GO" id="GO:0000978">
    <property type="term" value="F:RNA polymerase II cis-regulatory region sequence-specific DNA binding"/>
    <property type="evidence" value="ECO:0000318"/>
    <property type="project" value="GO_Central"/>
</dbReference>
<dbReference type="GO" id="GO:0008270">
    <property type="term" value="F:zinc ion binding"/>
    <property type="evidence" value="ECO:0007669"/>
    <property type="project" value="UniProtKB-KW"/>
</dbReference>
<dbReference type="GO" id="GO:0006355">
    <property type="term" value="P:regulation of DNA-templated transcription"/>
    <property type="evidence" value="ECO:0000318"/>
    <property type="project" value="GO_Central"/>
</dbReference>
<dbReference type="CDD" id="cd07765">
    <property type="entry name" value="KRAB_A-box"/>
    <property type="match status" value="1"/>
</dbReference>
<dbReference type="FunFam" id="3.30.160.60:FF:000374">
    <property type="entry name" value="Zinc finger protein 208"/>
    <property type="match status" value="1"/>
</dbReference>
<dbReference type="FunFam" id="3.30.160.60:FF:001868">
    <property type="entry name" value="Zinc finger protein 264"/>
    <property type="match status" value="2"/>
</dbReference>
<dbReference type="FunFam" id="3.30.160.60:FF:001181">
    <property type="entry name" value="Zinc finger protein 311"/>
    <property type="match status" value="1"/>
</dbReference>
<dbReference type="FunFam" id="3.30.160.60:FF:000120">
    <property type="entry name" value="Zinc finger protein 430"/>
    <property type="match status" value="6"/>
</dbReference>
<dbReference type="FunFam" id="3.30.160.60:FF:000672">
    <property type="entry name" value="Zinc finger protein 430"/>
    <property type="match status" value="1"/>
</dbReference>
<dbReference type="FunFam" id="3.30.160.60:FF:000362">
    <property type="entry name" value="Zinc finger protein 606"/>
    <property type="match status" value="1"/>
</dbReference>
<dbReference type="FunFam" id="3.30.160.60:FF:002483">
    <property type="entry name" value="Zinc finger protein 90"/>
    <property type="match status" value="1"/>
</dbReference>
<dbReference type="Gene3D" id="6.10.140.140">
    <property type="match status" value="1"/>
</dbReference>
<dbReference type="Gene3D" id="3.30.160.60">
    <property type="entry name" value="Classic Zinc Finger"/>
    <property type="match status" value="13"/>
</dbReference>
<dbReference type="InterPro" id="IPR050752">
    <property type="entry name" value="C2H2-ZF_domain"/>
</dbReference>
<dbReference type="InterPro" id="IPR001909">
    <property type="entry name" value="KRAB"/>
</dbReference>
<dbReference type="InterPro" id="IPR036051">
    <property type="entry name" value="KRAB_dom_sf"/>
</dbReference>
<dbReference type="InterPro" id="IPR036236">
    <property type="entry name" value="Znf_C2H2_sf"/>
</dbReference>
<dbReference type="InterPro" id="IPR013087">
    <property type="entry name" value="Znf_C2H2_type"/>
</dbReference>
<dbReference type="PANTHER" id="PTHR24384">
    <property type="entry name" value="FINGER PUTATIVE TRANSCRIPTION FACTOR FAMILY-RELATED"/>
    <property type="match status" value="1"/>
</dbReference>
<dbReference type="PANTHER" id="PTHR24384:SF128">
    <property type="entry name" value="ZINC FINGER PROTEIN 737"/>
    <property type="match status" value="1"/>
</dbReference>
<dbReference type="Pfam" id="PF01352">
    <property type="entry name" value="KRAB"/>
    <property type="match status" value="1"/>
</dbReference>
<dbReference type="Pfam" id="PF00096">
    <property type="entry name" value="zf-C2H2"/>
    <property type="match status" value="12"/>
</dbReference>
<dbReference type="SMART" id="SM00349">
    <property type="entry name" value="KRAB"/>
    <property type="match status" value="1"/>
</dbReference>
<dbReference type="SMART" id="SM00355">
    <property type="entry name" value="ZnF_C2H2"/>
    <property type="match status" value="13"/>
</dbReference>
<dbReference type="SUPFAM" id="SSF57667">
    <property type="entry name" value="beta-beta-alpha zinc fingers"/>
    <property type="match status" value="8"/>
</dbReference>
<dbReference type="SUPFAM" id="SSF109640">
    <property type="entry name" value="KRAB domain (Kruppel-associated box)"/>
    <property type="match status" value="1"/>
</dbReference>
<dbReference type="PROSITE" id="PS50805">
    <property type="entry name" value="KRAB"/>
    <property type="match status" value="1"/>
</dbReference>
<dbReference type="PROSITE" id="PS00028">
    <property type="entry name" value="ZINC_FINGER_C2H2_1"/>
    <property type="match status" value="13"/>
</dbReference>
<dbReference type="PROSITE" id="PS50157">
    <property type="entry name" value="ZINC_FINGER_C2H2_2"/>
    <property type="match status" value="13"/>
</dbReference>
<accession>O75373</accession>
<accession>C9JHM3</accession>
<sequence length="536" mass="61931">MGPLQFRDVAIEFSLEEWHCLDTAQRNLYRNVMLENYRNLVFLGIVVSKPDLITCLEQGKKPLTMKKHEMVANPSVTCSHFARDLWPEQSIKDSFQKVTLRRYENYGHDNLQFKKGCESVDECKVHKRGYNGLNQYLTTTQSKIFQCDKYVKVIHKFSNSNRHKIRHTGKKPFKCIECGKAFNQSSTLTTHKKIHTGEKPFKCEECGKAFNWSSHLTTHKRIHTGEKRYKCEDCGKAFSRFSYLTAHKIIHSGEKPYKCEECGKAFKRSSNLTTHKIIHTGEKPYKCEECGKAFKRSSILTAHKIIHSGEKPYKCEECGKAFKHPSVLTTHKRIHTGEKPYKCEECGRAFKYFSSLTTHKIIHSGEKPYKCEECGKAFNWSSHLTTHKRIHTGEKPYKCEECGEAFKYSSSLTTHKIIHTGQQPFKCEECGKAFKCFSILTTHKRIHTGEKPYKCEECGKAFNSSSHLTAHKRIHTGEKPYKCERCGKAFKRSFILTRHKRIHTGEKPYKCEECGKGFKCPSTLTTHKVIHTGEKL</sequence>
<evidence type="ECO:0000255" key="1">
    <source>
        <dbReference type="PROSITE-ProRule" id="PRU00042"/>
    </source>
</evidence>
<evidence type="ECO:0000255" key="2">
    <source>
        <dbReference type="PROSITE-ProRule" id="PRU00119"/>
    </source>
</evidence>
<evidence type="ECO:0000269" key="3">
    <source>
    </source>
</evidence>
<evidence type="ECO:0000305" key="4"/>
<gene>
    <name type="primary">ZNF737</name>
    <name type="synonym">ZNF102</name>
</gene>
<name>ZN737_HUMAN</name>
<keyword id="KW-0238">DNA-binding</keyword>
<keyword id="KW-0479">Metal-binding</keyword>
<keyword id="KW-0539">Nucleus</keyword>
<keyword id="KW-1267">Proteomics identification</keyword>
<keyword id="KW-1185">Reference proteome</keyword>
<keyword id="KW-0677">Repeat</keyword>
<keyword id="KW-0804">Transcription</keyword>
<keyword id="KW-0805">Transcription regulation</keyword>
<keyword id="KW-0862">Zinc</keyword>
<keyword id="KW-0863">Zinc-finger</keyword>
<proteinExistence type="evidence at protein level"/>
<comment type="function">
    <text>May be involved in transcriptional regulation.</text>
</comment>
<comment type="subcellular location">
    <subcellularLocation>
        <location evidence="4">Nucleus</location>
    </subcellularLocation>
</comment>
<comment type="similarity">
    <text evidence="4">Belongs to the krueppel C2H2-type zinc-finger protein family.</text>
</comment>
<feature type="chain" id="PRO_0000340686" description="Zinc finger protein 737">
    <location>
        <begin position="1"/>
        <end position="536"/>
    </location>
</feature>
<feature type="domain" description="KRAB" evidence="2">
    <location>
        <begin position="4"/>
        <end position="75"/>
    </location>
</feature>
<feature type="zinc finger region" description="C2H2-type 1" evidence="1">
    <location>
        <begin position="173"/>
        <end position="195"/>
    </location>
</feature>
<feature type="zinc finger region" description="C2H2-type 2" evidence="1">
    <location>
        <begin position="201"/>
        <end position="223"/>
    </location>
</feature>
<feature type="zinc finger region" description="C2H2-type 3" evidence="1">
    <location>
        <begin position="229"/>
        <end position="251"/>
    </location>
</feature>
<feature type="zinc finger region" description="C2H2-type 4" evidence="1">
    <location>
        <begin position="257"/>
        <end position="279"/>
    </location>
</feature>
<feature type="zinc finger region" description="C2H2-type 5" evidence="1">
    <location>
        <begin position="285"/>
        <end position="307"/>
    </location>
</feature>
<feature type="zinc finger region" description="C2H2-type 6" evidence="1">
    <location>
        <begin position="313"/>
        <end position="335"/>
    </location>
</feature>
<feature type="zinc finger region" description="C2H2-type 7" evidence="1">
    <location>
        <begin position="341"/>
        <end position="363"/>
    </location>
</feature>
<feature type="zinc finger region" description="C2H2-type 8" evidence="1">
    <location>
        <begin position="369"/>
        <end position="391"/>
    </location>
</feature>
<feature type="zinc finger region" description="C2H2-type 9" evidence="1">
    <location>
        <begin position="397"/>
        <end position="419"/>
    </location>
</feature>
<feature type="zinc finger region" description="C2H2-type 10" evidence="1">
    <location>
        <begin position="425"/>
        <end position="447"/>
    </location>
</feature>
<feature type="zinc finger region" description="C2H2-type 11" evidence="1">
    <location>
        <begin position="453"/>
        <end position="475"/>
    </location>
</feature>
<feature type="zinc finger region" description="C2H2-type 12" evidence="1">
    <location>
        <begin position="481"/>
        <end position="503"/>
    </location>
</feature>
<feature type="zinc finger region" description="C2H2-type 13" evidence="1">
    <location>
        <begin position="509"/>
        <end position="531"/>
    </location>
</feature>
<feature type="sequence variant" id="VAR_067460" description="In dbSNP:rs7254995.">
    <original>C</original>
    <variation>S</variation>
    <location>
        <position position="78"/>
    </location>
</feature>
<feature type="sequence variant" id="VAR_067461" description="In dbSNP:rs9653154.">
    <original>V</original>
    <variation>L</variation>
    <location>
        <position position="125"/>
    </location>
</feature>
<feature type="sequence variant" id="VAR_067462" description="In dbSNP:rs10410201.">
    <original>R</original>
    <variation>C</variation>
    <location>
        <position position="492"/>
    </location>
</feature>
<feature type="sequence variant" id="VAR_067463" description="In dbSNP:rs10411329." evidence="3">
    <original>K</original>
    <variation>E</variation>
    <location>
        <position position="516"/>
    </location>
</feature>
<protein>
    <recommendedName>
        <fullName>Zinc finger protein 737</fullName>
    </recommendedName>
    <alternativeName>
        <fullName>Zinc finger protein 102</fullName>
    </alternativeName>
</protein>
<reference key="1">
    <citation type="journal article" date="2004" name="Nature">
        <title>The DNA sequence and biology of human chromosome 19.</title>
        <authorList>
            <person name="Grimwood J."/>
            <person name="Gordon L.A."/>
            <person name="Olsen A.S."/>
            <person name="Terry A."/>
            <person name="Schmutz J."/>
            <person name="Lamerdin J.E."/>
            <person name="Hellsten U."/>
            <person name="Goodstein D."/>
            <person name="Couronne O."/>
            <person name="Tran-Gyamfi M."/>
            <person name="Aerts A."/>
            <person name="Altherr M."/>
            <person name="Ashworth L."/>
            <person name="Bajorek E."/>
            <person name="Black S."/>
            <person name="Branscomb E."/>
            <person name="Caenepeel S."/>
            <person name="Carrano A.V."/>
            <person name="Caoile C."/>
            <person name="Chan Y.M."/>
            <person name="Christensen M."/>
            <person name="Cleland C.A."/>
            <person name="Copeland A."/>
            <person name="Dalin E."/>
            <person name="Dehal P."/>
            <person name="Denys M."/>
            <person name="Detter J.C."/>
            <person name="Escobar J."/>
            <person name="Flowers D."/>
            <person name="Fotopulos D."/>
            <person name="Garcia C."/>
            <person name="Georgescu A.M."/>
            <person name="Glavina T."/>
            <person name="Gomez M."/>
            <person name="Gonzales E."/>
            <person name="Groza M."/>
            <person name="Hammon N."/>
            <person name="Hawkins T."/>
            <person name="Haydu L."/>
            <person name="Ho I."/>
            <person name="Huang W."/>
            <person name="Israni S."/>
            <person name="Jett J."/>
            <person name="Kadner K."/>
            <person name="Kimball H."/>
            <person name="Kobayashi A."/>
            <person name="Larionov V."/>
            <person name="Leem S.-H."/>
            <person name="Lopez F."/>
            <person name="Lou Y."/>
            <person name="Lowry S."/>
            <person name="Malfatti S."/>
            <person name="Martinez D."/>
            <person name="McCready P.M."/>
            <person name="Medina C."/>
            <person name="Morgan J."/>
            <person name="Nelson K."/>
            <person name="Nolan M."/>
            <person name="Ovcharenko I."/>
            <person name="Pitluck S."/>
            <person name="Pollard M."/>
            <person name="Popkie A.P."/>
            <person name="Predki P."/>
            <person name="Quan G."/>
            <person name="Ramirez L."/>
            <person name="Rash S."/>
            <person name="Retterer J."/>
            <person name="Rodriguez A."/>
            <person name="Rogers S."/>
            <person name="Salamov A."/>
            <person name="Salazar A."/>
            <person name="She X."/>
            <person name="Smith D."/>
            <person name="Slezak T."/>
            <person name="Solovyev V."/>
            <person name="Thayer N."/>
            <person name="Tice H."/>
            <person name="Tsai M."/>
            <person name="Ustaszewska A."/>
            <person name="Vo N."/>
            <person name="Wagner M."/>
            <person name="Wheeler J."/>
            <person name="Wu K."/>
            <person name="Xie G."/>
            <person name="Yang J."/>
            <person name="Dubchak I."/>
            <person name="Furey T.S."/>
            <person name="DeJong P."/>
            <person name="Dickson M."/>
            <person name="Gordon D."/>
            <person name="Eichler E.E."/>
            <person name="Pennacchio L.A."/>
            <person name="Richardson P."/>
            <person name="Stubbs L."/>
            <person name="Rokhsar D.S."/>
            <person name="Myers R.M."/>
            <person name="Rubin E.M."/>
            <person name="Lucas S.M."/>
        </authorList>
    </citation>
    <scope>NUCLEOTIDE SEQUENCE [LARGE SCALE GENOMIC DNA]</scope>
</reference>
<reference key="2">
    <citation type="journal article" date="2004" name="Genome Res.">
        <title>The status, quality, and expansion of the NIH full-length cDNA project: the Mammalian Gene Collection (MGC).</title>
        <authorList>
            <consortium name="The MGC Project Team"/>
        </authorList>
    </citation>
    <scope>NUCLEOTIDE SEQUENCE [LARGE SCALE MRNA]</scope>
    <scope>VARIANT GLU-516</scope>
</reference>
<reference key="3">
    <citation type="journal article" date="1993" name="EMBO J.">
        <title>Clustered organization of homologous KRAB zinc-finger genes with enhanced expression in human T lymphoid cells.</title>
        <authorList>
            <person name="Bellefroid E.J."/>
            <person name="Marine J.-C."/>
            <person name="Ried T."/>
            <person name="Lecocq P.J."/>
            <person name="Riviere M."/>
            <person name="Amemiya C.T."/>
            <person name="Poncelet D.A."/>
            <person name="Coulie P.G."/>
            <person name="de Jong P.J."/>
            <person name="Szpirer C."/>
            <person name="Ward D.C."/>
            <person name="Martial J.A."/>
        </authorList>
    </citation>
    <scope>NUCLEOTIDE SEQUENCE [GENOMIC DNA] OF 90-154</scope>
</reference>